<keyword id="KW-0030">Aminoacyl-tRNA synthetase</keyword>
<keyword id="KW-0067">ATP-binding</keyword>
<keyword id="KW-0963">Cytoplasm</keyword>
<keyword id="KW-0436">Ligase</keyword>
<keyword id="KW-0547">Nucleotide-binding</keyword>
<keyword id="KW-0648">Protein biosynthesis</keyword>
<proteinExistence type="inferred from homology"/>
<organism>
    <name type="scientific">Saccharolobus islandicus (strain L.S.2.15 / Lassen #1)</name>
    <name type="common">Sulfolobus islandicus</name>
    <dbReference type="NCBI Taxonomy" id="429572"/>
    <lineage>
        <taxon>Archaea</taxon>
        <taxon>Thermoproteota</taxon>
        <taxon>Thermoprotei</taxon>
        <taxon>Sulfolobales</taxon>
        <taxon>Sulfolobaceae</taxon>
        <taxon>Saccharolobus</taxon>
    </lineage>
</organism>
<feature type="chain" id="PRO_1000216402" description="Tyrosine--tRNA ligase">
    <location>
        <begin position="1"/>
        <end position="361"/>
    </location>
</feature>
<feature type="short sequence motif" description="'KMSKS' region">
    <location>
        <begin position="236"/>
        <end position="240"/>
    </location>
</feature>
<feature type="binding site" evidence="1">
    <location>
        <position position="36"/>
    </location>
    <ligand>
        <name>L-tyrosine</name>
        <dbReference type="ChEBI" id="CHEBI:58315"/>
    </ligand>
</feature>
<feature type="binding site" evidence="1">
    <location>
        <position position="162"/>
    </location>
    <ligand>
        <name>L-tyrosine</name>
        <dbReference type="ChEBI" id="CHEBI:58315"/>
    </ligand>
</feature>
<feature type="binding site" evidence="1">
    <location>
        <position position="166"/>
    </location>
    <ligand>
        <name>L-tyrosine</name>
        <dbReference type="ChEBI" id="CHEBI:58315"/>
    </ligand>
</feature>
<feature type="binding site" evidence="1">
    <location>
        <position position="169"/>
    </location>
    <ligand>
        <name>L-tyrosine</name>
        <dbReference type="ChEBI" id="CHEBI:58315"/>
    </ligand>
</feature>
<feature type="binding site" evidence="1">
    <location>
        <position position="184"/>
    </location>
    <ligand>
        <name>L-tyrosine</name>
        <dbReference type="ChEBI" id="CHEBI:58315"/>
    </ligand>
</feature>
<feature type="binding site" evidence="1">
    <location>
        <position position="239"/>
    </location>
    <ligand>
        <name>ATP</name>
        <dbReference type="ChEBI" id="CHEBI:30616"/>
    </ligand>
</feature>
<reference key="1">
    <citation type="journal article" date="2009" name="Proc. Natl. Acad. Sci. U.S.A.">
        <title>Biogeography of the Sulfolobus islandicus pan-genome.</title>
        <authorList>
            <person name="Reno M.L."/>
            <person name="Held N.L."/>
            <person name="Fields C.J."/>
            <person name="Burke P.V."/>
            <person name="Whitaker R.J."/>
        </authorList>
    </citation>
    <scope>NUCLEOTIDE SEQUENCE [LARGE SCALE GENOMIC DNA]</scope>
    <source>
        <strain>L.S.2.15 / Lassen #1</strain>
    </source>
</reference>
<protein>
    <recommendedName>
        <fullName evidence="1">Tyrosine--tRNA ligase</fullName>
        <ecNumber evidence="1">6.1.1.1</ecNumber>
    </recommendedName>
    <alternativeName>
        <fullName evidence="1">Tyrosyl-tRNA synthetase</fullName>
        <shortName evidence="1">TyrRS</shortName>
    </alternativeName>
</protein>
<accession>C3MJP1</accession>
<evidence type="ECO:0000255" key="1">
    <source>
        <dbReference type="HAMAP-Rule" id="MF_02009"/>
    </source>
</evidence>
<sequence length="361" mass="41280">MSIDQRLQLITRNAAEIITIDELRKKLESEEKLKGYIGFEPSGLFHIGWLIWTQKVKDLVEAGVNMTLLRATWHAWINDKLGGDLSLIKMAADYTVEVIKNYGVDTTKLNIVDADDMVKEKDYWALVIKVAKNASLARIKRALTIMGRRAEEAEIDASKLIYPAMQVSDIFYLDLDIALGGTDQRKAHMLARDVAEKMGKKKIVSIHTPLLVGLQGGQRMSITEGMEEDDIQAEIKMSKSKPESAIFVSDSREDVERKIMGAYCPKGVAENNPILQILKYIIFPRYNFVKIERDIRYGGDVEFKDYEELERAYIEGKIHPMDLKKATARRLNEILEPIRKSLERKPEFEEMIQKISKSVTR</sequence>
<gene>
    <name evidence="1" type="primary">tyrS</name>
    <name type="ordered locus">LS215_2207</name>
</gene>
<dbReference type="EC" id="6.1.1.1" evidence="1"/>
<dbReference type="EMBL" id="CP001399">
    <property type="protein sequence ID" value="ACP36194.1"/>
    <property type="molecule type" value="Genomic_DNA"/>
</dbReference>
<dbReference type="RefSeq" id="WP_012714152.1">
    <property type="nucleotide sequence ID" value="NC_012589.1"/>
</dbReference>
<dbReference type="SMR" id="C3MJP1"/>
<dbReference type="KEGG" id="sis:LS215_2207"/>
<dbReference type="HOGENOM" id="CLU_035267_1_1_2"/>
<dbReference type="OrthoDB" id="8389at2157"/>
<dbReference type="Proteomes" id="UP000001747">
    <property type="component" value="Chromosome"/>
</dbReference>
<dbReference type="GO" id="GO:0005737">
    <property type="term" value="C:cytoplasm"/>
    <property type="evidence" value="ECO:0007669"/>
    <property type="project" value="UniProtKB-SubCell"/>
</dbReference>
<dbReference type="GO" id="GO:0005524">
    <property type="term" value="F:ATP binding"/>
    <property type="evidence" value="ECO:0007669"/>
    <property type="project" value="UniProtKB-UniRule"/>
</dbReference>
<dbReference type="GO" id="GO:0004831">
    <property type="term" value="F:tyrosine-tRNA ligase activity"/>
    <property type="evidence" value="ECO:0007669"/>
    <property type="project" value="UniProtKB-UniRule"/>
</dbReference>
<dbReference type="GO" id="GO:0006437">
    <property type="term" value="P:tyrosyl-tRNA aminoacylation"/>
    <property type="evidence" value="ECO:0007669"/>
    <property type="project" value="UniProtKB-UniRule"/>
</dbReference>
<dbReference type="CDD" id="cd00805">
    <property type="entry name" value="TyrRS_core"/>
    <property type="match status" value="1"/>
</dbReference>
<dbReference type="Gene3D" id="3.40.50.620">
    <property type="entry name" value="HUPs"/>
    <property type="match status" value="1"/>
</dbReference>
<dbReference type="Gene3D" id="1.10.240.10">
    <property type="entry name" value="Tyrosyl-Transfer RNA Synthetase"/>
    <property type="match status" value="1"/>
</dbReference>
<dbReference type="HAMAP" id="MF_02009">
    <property type="entry name" value="Tyr_tRNA_synth_type4"/>
    <property type="match status" value="1"/>
</dbReference>
<dbReference type="InterPro" id="IPR002305">
    <property type="entry name" value="aa-tRNA-synth_Ic"/>
</dbReference>
<dbReference type="InterPro" id="IPR014729">
    <property type="entry name" value="Rossmann-like_a/b/a_fold"/>
</dbReference>
<dbReference type="InterPro" id="IPR002307">
    <property type="entry name" value="Tyr-tRNA-ligase"/>
</dbReference>
<dbReference type="InterPro" id="IPR023678">
    <property type="entry name" value="Tyr-tRNA-ligase_4"/>
</dbReference>
<dbReference type="InterPro" id="IPR023617">
    <property type="entry name" value="Tyr-tRNA-ligase_arc/euk-type"/>
</dbReference>
<dbReference type="InterPro" id="IPR050489">
    <property type="entry name" value="Tyr-tRNA_synthase"/>
</dbReference>
<dbReference type="NCBIfam" id="NF006330">
    <property type="entry name" value="PRK08560.1"/>
    <property type="match status" value="1"/>
</dbReference>
<dbReference type="NCBIfam" id="TIGR00234">
    <property type="entry name" value="tyrS"/>
    <property type="match status" value="1"/>
</dbReference>
<dbReference type="PANTHER" id="PTHR46264:SF4">
    <property type="entry name" value="TYROSINE--TRNA LIGASE, CYTOPLASMIC"/>
    <property type="match status" value="1"/>
</dbReference>
<dbReference type="PANTHER" id="PTHR46264">
    <property type="entry name" value="TYROSINE-TRNA LIGASE"/>
    <property type="match status" value="1"/>
</dbReference>
<dbReference type="Pfam" id="PF00579">
    <property type="entry name" value="tRNA-synt_1b"/>
    <property type="match status" value="1"/>
</dbReference>
<dbReference type="PIRSF" id="PIRSF006588">
    <property type="entry name" value="TyrRS_arch_euk"/>
    <property type="match status" value="1"/>
</dbReference>
<dbReference type="PRINTS" id="PR01040">
    <property type="entry name" value="TRNASYNTHTYR"/>
</dbReference>
<dbReference type="SUPFAM" id="SSF52374">
    <property type="entry name" value="Nucleotidylyl transferase"/>
    <property type="match status" value="1"/>
</dbReference>
<name>SYY_SACI2</name>
<comment type="function">
    <text evidence="1">Catalyzes the attachment of tyrosine to tRNA(Tyr) in a two-step reaction: tyrosine is first activated by ATP to form Tyr-AMP and then transferred to the acceptor end of tRNA(Tyr).</text>
</comment>
<comment type="catalytic activity">
    <reaction evidence="1">
        <text>tRNA(Tyr) + L-tyrosine + ATP = L-tyrosyl-tRNA(Tyr) + AMP + diphosphate + H(+)</text>
        <dbReference type="Rhea" id="RHEA:10220"/>
        <dbReference type="Rhea" id="RHEA-COMP:9706"/>
        <dbReference type="Rhea" id="RHEA-COMP:9707"/>
        <dbReference type="ChEBI" id="CHEBI:15378"/>
        <dbReference type="ChEBI" id="CHEBI:30616"/>
        <dbReference type="ChEBI" id="CHEBI:33019"/>
        <dbReference type="ChEBI" id="CHEBI:58315"/>
        <dbReference type="ChEBI" id="CHEBI:78442"/>
        <dbReference type="ChEBI" id="CHEBI:78536"/>
        <dbReference type="ChEBI" id="CHEBI:456215"/>
        <dbReference type="EC" id="6.1.1.1"/>
    </reaction>
</comment>
<comment type="subunit">
    <text evidence="1">Homodimer.</text>
</comment>
<comment type="subcellular location">
    <subcellularLocation>
        <location evidence="1">Cytoplasm</location>
    </subcellularLocation>
</comment>
<comment type="similarity">
    <text evidence="1">Belongs to the class-I aminoacyl-tRNA synthetase family. TyrS type 4 subfamily.</text>
</comment>